<name>MAB31_CAEEL</name>
<feature type="chain" id="PRO_0000457871" description="Male abnormal protein mab-31">
    <location>
        <begin position="1"/>
        <end position="427"/>
    </location>
</feature>
<feature type="region of interest" description="Disordered" evidence="1">
    <location>
        <begin position="68"/>
        <end position="102"/>
    </location>
</feature>
<protein>
    <recommendedName>
        <fullName evidence="7">Male abnormal protein mab-31</fullName>
    </recommendedName>
</protein>
<sequence>MNSLEYLIANPHILSDTTLTDALAALASSTNVENQDEEFDMEVNSDDEMKIDLSALINPSVFNALQLPIGTGRFPNPSPPRSSSGTNTPIRKTPGSRPDRGKFTILDNAEVAGPEEVLNVNFDSEILQRIFSDPKLGIQFLARYGLIPNTRVCRVQDCPKDQLMSLIKHANGFVWRCRSCRKRREKRIITKISVYEGTFLFYSRMPLNKFFIFMLNWCENPGLSITEYNRLMGENRLVEETIYNTIGFMRDIIQNWCDTIISSHVPIGGPHRVVEVVETLSTEQLSNKTRNRRTRHYTTRTVFISLADDKIKSVDFPLHNVNDLERALLECVQPGSIIVMRDSFMERFGQQEEISNALFNHYKVKSICDVWPDFNERERNKQYIKTEMNQVPNVNQEPYAYEYFFRRCFADKCFNHLLRVIRLLYQK</sequence>
<organism evidence="6">
    <name type="scientific">Caenorhabditis elegans</name>
    <dbReference type="NCBI Taxonomy" id="6239"/>
    <lineage>
        <taxon>Eukaryota</taxon>
        <taxon>Metazoa</taxon>
        <taxon>Ecdysozoa</taxon>
        <taxon>Nematoda</taxon>
        <taxon>Chromadorea</taxon>
        <taxon>Rhabditida</taxon>
        <taxon>Rhabditina</taxon>
        <taxon>Rhabditomorpha</taxon>
        <taxon>Rhabditoidea</taxon>
        <taxon>Rhabditidae</taxon>
        <taxon>Peloderinae</taxon>
        <taxon>Caenorhabditis</taxon>
    </lineage>
</organism>
<reference evidence="6" key="1">
    <citation type="journal article" date="1998" name="Science">
        <title>Genome sequence of the nematode C. elegans: a platform for investigating biology.</title>
        <authorList>
            <consortium name="The C. elegans sequencing consortium"/>
        </authorList>
    </citation>
    <scope>NUCLEOTIDE SEQUENCE [LARGE SCALE GENOMIC DNA]</scope>
    <source>
        <strain evidence="6">Bristol N2</strain>
    </source>
</reference>
<reference evidence="5" key="2">
    <citation type="journal article" date="2010" name="BMC Dev. Biol.">
        <title>mab-31 and the TGF-beta pathway act in the ray lineage to pattern C. elegans male sensory rays.</title>
        <authorList>
            <person name="Wong Y.F."/>
            <person name="Sheng Q."/>
            <person name="Chung J.W."/>
            <person name="Chan J.K."/>
            <person name="Chow K.L."/>
        </authorList>
    </citation>
    <scope>FUNCTION</scope>
    <scope>SUBCELLULAR LOCATION</scope>
    <scope>DEVELOPMENTAL STAGE</scope>
    <scope>DISRUPTION PHENOTYPE</scope>
</reference>
<reference evidence="5" key="3">
    <citation type="journal article" date="2020" name="Sci. Total Environ.">
        <title>Response of DBL-1/TGF-beta signaling-mediated neuron-intestine communication to nanopolystyrene in nematode Caenorhabditis elegans.</title>
        <authorList>
            <person name="Liu H."/>
            <person name="Zhang R."/>
            <person name="Wang D."/>
        </authorList>
    </citation>
    <scope>FUNCTION</scope>
    <scope>INDUCTION</scope>
    <scope>DISRUPTION PHENOTYPE</scope>
</reference>
<keyword id="KW-0539">Nucleus</keyword>
<keyword id="KW-1185">Reference proteome</keyword>
<keyword id="KW-0804">Transcription</keyword>
<keyword id="KW-0805">Transcription regulation</keyword>
<gene>
    <name evidence="7" type="primary">mab-31</name>
    <name evidence="7" type="ORF">Y54E10A.16</name>
</gene>
<accession>Q9N3E2</accession>
<dbReference type="EMBL" id="BX284601">
    <property type="protein sequence ID" value="CCD72834.1"/>
    <property type="molecule type" value="Genomic_DNA"/>
</dbReference>
<dbReference type="RefSeq" id="NP_491129.1">
    <property type="nucleotide sequence ID" value="NM_058728.8"/>
</dbReference>
<dbReference type="FunCoup" id="Q9N3E2">
    <property type="interactions" value="187"/>
</dbReference>
<dbReference type="STRING" id="6239.Y54E10A.16.1"/>
<dbReference type="PaxDb" id="6239-Y54E10A.16.1"/>
<dbReference type="PeptideAtlas" id="Q9N3E2"/>
<dbReference type="EnsemblMetazoa" id="Y54E10A.16.1">
    <property type="protein sequence ID" value="Y54E10A.16.1"/>
    <property type="gene ID" value="WBGene00021834"/>
</dbReference>
<dbReference type="GeneID" id="171898"/>
<dbReference type="KEGG" id="cel:CELE_Y54E10A.16"/>
<dbReference type="UCSC" id="Y54E10A.16a">
    <property type="organism name" value="c. elegans"/>
</dbReference>
<dbReference type="AGR" id="WB:WBGene00021834"/>
<dbReference type="CTD" id="171898"/>
<dbReference type="WormBase" id="Y54E10A.16">
    <property type="protein sequence ID" value="CE24445"/>
    <property type="gene ID" value="WBGene00021834"/>
    <property type="gene designation" value="mab-31"/>
</dbReference>
<dbReference type="eggNOG" id="ENOG502TGRQ">
    <property type="taxonomic scope" value="Eukaryota"/>
</dbReference>
<dbReference type="HOGENOM" id="CLU_645977_0_0_1"/>
<dbReference type="InParanoid" id="Q9N3E2"/>
<dbReference type="OMA" id="HANGFVW"/>
<dbReference type="OrthoDB" id="5789296at2759"/>
<dbReference type="PRO" id="PR:Q9N3E2"/>
<dbReference type="Proteomes" id="UP000001940">
    <property type="component" value="Chromosome I"/>
</dbReference>
<dbReference type="Bgee" id="WBGene00021834">
    <property type="expression patterns" value="Expressed in pharyngeal muscle cell (C elegans) and 3 other cell types or tissues"/>
</dbReference>
<dbReference type="GO" id="GO:0005634">
    <property type="term" value="C:nucleus"/>
    <property type="evidence" value="ECO:0000314"/>
    <property type="project" value="WormBase"/>
</dbReference>
<dbReference type="GO" id="GO:0000981">
    <property type="term" value="F:DNA-binding transcription factor activity, RNA polymerase II-specific"/>
    <property type="evidence" value="ECO:0000304"/>
    <property type="project" value="WormBase"/>
</dbReference>
<dbReference type="GO" id="GO:0045138">
    <property type="term" value="P:nematode male tail tip morphogenesis"/>
    <property type="evidence" value="ECO:0000315"/>
    <property type="project" value="WormBase"/>
</dbReference>
<dbReference type="GO" id="GO:0141091">
    <property type="term" value="P:transforming growth factor beta receptor superfamily signaling pathway"/>
    <property type="evidence" value="ECO:0000316"/>
    <property type="project" value="WormBase"/>
</dbReference>
<proteinExistence type="evidence at transcript level"/>
<evidence type="ECO:0000256" key="1">
    <source>
        <dbReference type="SAM" id="MobiDB-lite"/>
    </source>
</evidence>
<evidence type="ECO:0000269" key="2">
    <source>
    </source>
</evidence>
<evidence type="ECO:0000269" key="3">
    <source>
    </source>
</evidence>
<evidence type="ECO:0000303" key="4">
    <source>
    </source>
</evidence>
<evidence type="ECO:0000305" key="5"/>
<evidence type="ECO:0000312" key="6">
    <source>
        <dbReference type="Proteomes" id="UP000001940"/>
    </source>
</evidence>
<evidence type="ECO:0000312" key="7">
    <source>
        <dbReference type="WormBase" id="Y54E10A.16"/>
    </source>
</evidence>
<comment type="function">
    <text evidence="2 3 4">Putative transcription factor (PubMed:32758726). Acts in a TGF-beta-like pathway during development of male-specific genital sensilla (simple sense organs), known as rays (PubMed:20687916). Involved in production of reactive oxygen species (ROS), acting downstream of the TGF-beta-like dbl-1 signaling pathway (PubMed:32758726). Involved in locomotory behavior (PubMed:32758726).</text>
</comment>
<comment type="subcellular location">
    <subcellularLocation>
        <location evidence="2">Nucleus</location>
    </subcellularLocation>
</comment>
<comment type="developmental stage">
    <text evidence="2">Expressed in gut cells of the pretzel stage embryo and throughout the larval stages (PubMed:20687916). Expressed in adult males and hermaphrodites, in the pharynx, body hypodermis, and intestine (PubMed:20687916). Expressed in support cells of neuronal sensilla, such as amphid and phasmid socket cells in hermaphrodites, and cell bodies and processes of all sensory rays in males (PubMed:20687916).</text>
</comment>
<comment type="induction">
    <text evidence="3">Induced by exposure to nano-polystyrene particles.</text>
</comment>
<comment type="disruption phenotype">
    <text evidence="2 3">RNAi-mediated knockdown causes abnormal male tail development (PubMed:20687916). Abnormal fusion of structures in male-specific genital sensilla (simple sense organs) known as rays (PubMed:20687916). Abnormal fusion of rays 6 and 7 enhanced in a sma-6 mutant background (PubMed:20687916). Reduced fecundity in hermaphrodites (PubMed:20687916). In response to nano-polystyrene, causes decreased locomotion behavior and increased reactive oxygen species (ROS) production (PubMed:32758726). Intestine-specific RNAi-mediated knockdown causes increased ROS production and reduces expression of daf-16 and sod-3 (PubMed:32758726).</text>
</comment>